<gene>
    <name evidence="1" type="primary">arnT</name>
    <name type="ordered locus">ECED1_2724</name>
</gene>
<feature type="chain" id="PRO_0000380000" description="Undecaprenyl phosphate-alpha-4-amino-4-deoxy-L-arabinose arabinosyl transferase">
    <location>
        <begin position="1"/>
        <end position="550"/>
    </location>
</feature>
<feature type="transmembrane region" description="Helical" evidence="1">
    <location>
        <begin position="7"/>
        <end position="27"/>
    </location>
</feature>
<feature type="transmembrane region" description="Helical" evidence="1">
    <location>
        <begin position="81"/>
        <end position="101"/>
    </location>
</feature>
<feature type="transmembrane region" description="Helical" evidence="1">
    <location>
        <begin position="113"/>
        <end position="133"/>
    </location>
</feature>
<feature type="transmembrane region" description="Helical" evidence="1">
    <location>
        <begin position="134"/>
        <end position="154"/>
    </location>
</feature>
<feature type="transmembrane region" description="Helical" evidence="1">
    <location>
        <begin position="165"/>
        <end position="185"/>
    </location>
</feature>
<feature type="transmembrane region" description="Helical" evidence="1">
    <location>
        <begin position="204"/>
        <end position="224"/>
    </location>
</feature>
<feature type="transmembrane region" description="Helical" evidence="1">
    <location>
        <begin position="263"/>
        <end position="283"/>
    </location>
</feature>
<feature type="transmembrane region" description="Helical" evidence="1">
    <location>
        <begin position="288"/>
        <end position="308"/>
    </location>
</feature>
<feature type="transmembrane region" description="Helical" evidence="1">
    <location>
        <begin position="315"/>
        <end position="335"/>
    </location>
</feature>
<feature type="transmembrane region" description="Helical" evidence="1">
    <location>
        <begin position="346"/>
        <end position="366"/>
    </location>
</feature>
<feature type="transmembrane region" description="Helical" evidence="1">
    <location>
        <begin position="382"/>
        <end position="402"/>
    </location>
</feature>
<feature type="transmembrane region" description="Helical" evidence="1">
    <location>
        <begin position="406"/>
        <end position="426"/>
    </location>
</feature>
<comment type="function">
    <text evidence="1">Catalyzes the transfer of the L-Ara4N moiety of the glycolipid undecaprenyl phosphate-alpha-L-Ara4N to lipid A. The modified arabinose is attached to lipid A and is required for resistance to polymyxin and cationic antimicrobial peptides.</text>
</comment>
<comment type="catalytic activity">
    <reaction evidence="1">
        <text>4-amino-4-deoxy-alpha-L-arabinopyranosyl di-trans,octa-cis-undecaprenyl phosphate + lipid IVA = lipid IIA + di-trans,octa-cis-undecaprenyl phosphate.</text>
        <dbReference type="EC" id="2.4.2.43"/>
    </reaction>
</comment>
<comment type="pathway">
    <text evidence="1">Lipopolysaccharide metabolism; 4-amino-4-deoxy-beta-L-arabinose-lipid A biosynthesis.</text>
</comment>
<comment type="subcellular location">
    <subcellularLocation>
        <location evidence="1">Cell inner membrane</location>
        <topology evidence="1">Multi-pass membrane protein</topology>
    </subcellularLocation>
</comment>
<comment type="similarity">
    <text evidence="1">Belongs to the glycosyltransferase 83 family.</text>
</comment>
<reference key="1">
    <citation type="journal article" date="2009" name="PLoS Genet.">
        <title>Organised genome dynamics in the Escherichia coli species results in highly diverse adaptive paths.</title>
        <authorList>
            <person name="Touchon M."/>
            <person name="Hoede C."/>
            <person name="Tenaillon O."/>
            <person name="Barbe V."/>
            <person name="Baeriswyl S."/>
            <person name="Bidet P."/>
            <person name="Bingen E."/>
            <person name="Bonacorsi S."/>
            <person name="Bouchier C."/>
            <person name="Bouvet O."/>
            <person name="Calteau A."/>
            <person name="Chiapello H."/>
            <person name="Clermont O."/>
            <person name="Cruveiller S."/>
            <person name="Danchin A."/>
            <person name="Diard M."/>
            <person name="Dossat C."/>
            <person name="Karoui M.E."/>
            <person name="Frapy E."/>
            <person name="Garry L."/>
            <person name="Ghigo J.M."/>
            <person name="Gilles A.M."/>
            <person name="Johnson J."/>
            <person name="Le Bouguenec C."/>
            <person name="Lescat M."/>
            <person name="Mangenot S."/>
            <person name="Martinez-Jehanne V."/>
            <person name="Matic I."/>
            <person name="Nassif X."/>
            <person name="Oztas S."/>
            <person name="Petit M.A."/>
            <person name="Pichon C."/>
            <person name="Rouy Z."/>
            <person name="Ruf C.S."/>
            <person name="Schneider D."/>
            <person name="Tourret J."/>
            <person name="Vacherie B."/>
            <person name="Vallenet D."/>
            <person name="Medigue C."/>
            <person name="Rocha E.P.C."/>
            <person name="Denamur E."/>
        </authorList>
    </citation>
    <scope>NUCLEOTIDE SEQUENCE [LARGE SCALE GENOMIC DNA]</scope>
    <source>
        <strain>ED1a</strain>
    </source>
</reference>
<name>ARNT_ECO81</name>
<protein>
    <recommendedName>
        <fullName evidence="1">Undecaprenyl phosphate-alpha-4-amino-4-deoxy-L-arabinose arabinosyl transferase</fullName>
        <ecNumber evidence="1">2.4.2.43</ecNumber>
    </recommendedName>
    <alternativeName>
        <fullName evidence="1">4-amino-4-deoxy-L-arabinose lipid A transferase</fullName>
    </alternativeName>
    <alternativeName>
        <fullName evidence="1">Lipid IV(A) 4-amino-4-deoxy-L-arabinosyltransferase</fullName>
    </alternativeName>
    <alternativeName>
        <fullName evidence="1">Undecaprenyl phosphate-alpha-L-Ara4N transferase</fullName>
    </alternativeName>
</protein>
<organism>
    <name type="scientific">Escherichia coli O81 (strain ED1a)</name>
    <dbReference type="NCBI Taxonomy" id="585397"/>
    <lineage>
        <taxon>Bacteria</taxon>
        <taxon>Pseudomonadati</taxon>
        <taxon>Pseudomonadota</taxon>
        <taxon>Gammaproteobacteria</taxon>
        <taxon>Enterobacterales</taxon>
        <taxon>Enterobacteriaceae</taxon>
        <taxon>Escherichia</taxon>
    </lineage>
</organism>
<accession>B7MXT9</accession>
<sequence length="550" mass="62582">MKSVRYLIGLFAFIACYYLLPISTRLLWQPDETRYAEISREMLASGDWIVPHLLGLRYFEKPIAGYWINSIGQWLFGANNFGVRAGVIFATLLTAALVTWFTLRLWRDKRLALLATVIYLSLFIVYAIGTYAVLDPFITFWLVAGMCSFWLAMQAQTWKGKSAGFLLLGITCGMGVMTKGFLALAVPVLSVLPWVATQKRWKDLFIYGWLAVISCVLTVLPWGLAIAQREPDFWHYFFWVEHIQRFALDDAQHRAPFWYYLPVVIAGSLPWLGLLPGALYAGWKNRKHSATVYLLSWTIMPLLFFSVAKGKLPTYILSCFAPLAMLMAHYALLAAKNNPLALRINGWINIAFGVTGIIATFVVSPWGPMNTPVWQTFESYKVFCAWSIFSLWAFFGWYTLTNVEKTWPFAALCPLGLALLVGFSIPDRVMEGKHPQFFVEMTQESLQPSRYILTDSVGVAAGLAWSLQRDDIIMYRQTGELKYGLNYPDAKGRFVSGDEFANWLNQHRQEGIITLVLSVDRDEDINSLAIPPADVIDRQERLVLIQYRPK</sequence>
<keyword id="KW-0997">Cell inner membrane</keyword>
<keyword id="KW-1003">Cell membrane</keyword>
<keyword id="KW-0328">Glycosyltransferase</keyword>
<keyword id="KW-0441">Lipid A biosynthesis</keyword>
<keyword id="KW-0444">Lipid biosynthesis</keyword>
<keyword id="KW-0443">Lipid metabolism</keyword>
<keyword id="KW-0448">Lipopolysaccharide biosynthesis</keyword>
<keyword id="KW-0472">Membrane</keyword>
<keyword id="KW-0808">Transferase</keyword>
<keyword id="KW-0812">Transmembrane</keyword>
<keyword id="KW-1133">Transmembrane helix</keyword>
<dbReference type="EC" id="2.4.2.43" evidence="1"/>
<dbReference type="EMBL" id="CU928162">
    <property type="protein sequence ID" value="CAR08905.2"/>
    <property type="molecule type" value="Genomic_DNA"/>
</dbReference>
<dbReference type="RefSeq" id="WP_000844068.1">
    <property type="nucleotide sequence ID" value="NC_011745.1"/>
</dbReference>
<dbReference type="SMR" id="B7MXT9"/>
<dbReference type="CAZy" id="GT83">
    <property type="family name" value="Glycosyltransferase Family 83"/>
</dbReference>
<dbReference type="KEGG" id="ecq:ECED1_2724"/>
<dbReference type="HOGENOM" id="CLU_019200_2_1_6"/>
<dbReference type="UniPathway" id="UPA00037"/>
<dbReference type="Proteomes" id="UP000000748">
    <property type="component" value="Chromosome"/>
</dbReference>
<dbReference type="GO" id="GO:0005886">
    <property type="term" value="C:plasma membrane"/>
    <property type="evidence" value="ECO:0007669"/>
    <property type="project" value="UniProtKB-SubCell"/>
</dbReference>
<dbReference type="GO" id="GO:0103015">
    <property type="term" value="F:4-amino-4-deoxy-L-arabinose transferase activity"/>
    <property type="evidence" value="ECO:0007669"/>
    <property type="project" value="UniProtKB-EC"/>
</dbReference>
<dbReference type="GO" id="GO:0000030">
    <property type="term" value="F:mannosyltransferase activity"/>
    <property type="evidence" value="ECO:0007669"/>
    <property type="project" value="InterPro"/>
</dbReference>
<dbReference type="GO" id="GO:0009245">
    <property type="term" value="P:lipid A biosynthetic process"/>
    <property type="evidence" value="ECO:0007669"/>
    <property type="project" value="UniProtKB-UniRule"/>
</dbReference>
<dbReference type="GO" id="GO:0009103">
    <property type="term" value="P:lipopolysaccharide biosynthetic process"/>
    <property type="evidence" value="ECO:0007669"/>
    <property type="project" value="UniProtKB-KW"/>
</dbReference>
<dbReference type="GO" id="GO:0006493">
    <property type="term" value="P:protein O-linked glycosylation"/>
    <property type="evidence" value="ECO:0007669"/>
    <property type="project" value="InterPro"/>
</dbReference>
<dbReference type="GO" id="GO:0010041">
    <property type="term" value="P:response to iron(III) ion"/>
    <property type="evidence" value="ECO:0007669"/>
    <property type="project" value="TreeGrafter"/>
</dbReference>
<dbReference type="HAMAP" id="MF_01165">
    <property type="entry name" value="ArnT_transfer"/>
    <property type="match status" value="1"/>
</dbReference>
<dbReference type="InterPro" id="IPR022839">
    <property type="entry name" value="ArnT_tfrase"/>
</dbReference>
<dbReference type="InterPro" id="IPR003342">
    <property type="entry name" value="Glyco_trans_39/83"/>
</dbReference>
<dbReference type="InterPro" id="IPR050297">
    <property type="entry name" value="LipidA_mod_glycosyltrf_83"/>
</dbReference>
<dbReference type="NCBIfam" id="NF009784">
    <property type="entry name" value="PRK13279.1"/>
    <property type="match status" value="1"/>
</dbReference>
<dbReference type="PANTHER" id="PTHR33908">
    <property type="entry name" value="MANNOSYLTRANSFERASE YKCB-RELATED"/>
    <property type="match status" value="1"/>
</dbReference>
<dbReference type="PANTHER" id="PTHR33908:SF3">
    <property type="entry name" value="UNDECAPRENYL PHOSPHATE-ALPHA-4-AMINO-4-DEOXY-L-ARABINOSE ARABINOSYL TRANSFERASE"/>
    <property type="match status" value="1"/>
</dbReference>
<dbReference type="Pfam" id="PF02366">
    <property type="entry name" value="PMT"/>
    <property type="match status" value="1"/>
</dbReference>
<evidence type="ECO:0000255" key="1">
    <source>
        <dbReference type="HAMAP-Rule" id="MF_01165"/>
    </source>
</evidence>
<proteinExistence type="inferred from homology"/>